<keyword id="KW-0010">Activator</keyword>
<keyword id="KW-0963">Cytoplasm</keyword>
<keyword id="KW-0238">DNA-binding</keyword>
<keyword id="KW-0276">Fatty acid metabolism</keyword>
<keyword id="KW-0443">Lipid metabolism</keyword>
<keyword id="KW-1185">Reference proteome</keyword>
<keyword id="KW-0678">Repressor</keyword>
<keyword id="KW-0804">Transcription</keyword>
<keyword id="KW-0805">Transcription regulation</keyword>
<accession>A1AAB0</accession>
<proteinExistence type="inferred from homology"/>
<organism>
    <name type="scientific">Escherichia coli O1:K1 / APEC</name>
    <dbReference type="NCBI Taxonomy" id="405955"/>
    <lineage>
        <taxon>Bacteria</taxon>
        <taxon>Pseudomonadati</taxon>
        <taxon>Pseudomonadota</taxon>
        <taxon>Gammaproteobacteria</taxon>
        <taxon>Enterobacterales</taxon>
        <taxon>Enterobacteriaceae</taxon>
        <taxon>Escherichia</taxon>
    </lineage>
</organism>
<evidence type="ECO:0000255" key="1">
    <source>
        <dbReference type="HAMAP-Rule" id="MF_00696"/>
    </source>
</evidence>
<comment type="function">
    <text evidence="1">Multifunctional regulator of fatty acid metabolism.</text>
</comment>
<comment type="subunit">
    <text evidence="1">Homodimer.</text>
</comment>
<comment type="subcellular location">
    <subcellularLocation>
        <location evidence="1">Cytoplasm</location>
    </subcellularLocation>
</comment>
<protein>
    <recommendedName>
        <fullName evidence="1">Fatty acid metabolism regulator protein</fullName>
    </recommendedName>
</protein>
<gene>
    <name evidence="1" type="primary">fadR</name>
    <name type="ordered locus">Ecok1_11060</name>
    <name type="ORF">APECO1_299</name>
</gene>
<sequence>MVIKAQSPAGFAEEYIIESIWNNRFPPGTILPAERELSELIGVTRTTLREVLQRLARDGWLTIQHGKPTKVNNFWETSGLNILETLARLDHESVPQLIDNLLSVRTNISTIFIRTAFRQHPDKAQEVLATANEVADHADAFAELDYNIFRGLAFASGNPIYGLILNGMKGLYTRIGRHYFANPEARSLALGFYHKLSALCSEGAHDQVYETVRRYGHESGEIWHRMQKNLPGDLAIQGR</sequence>
<dbReference type="EMBL" id="CP000468">
    <property type="protein sequence ID" value="ABJ00600.1"/>
    <property type="molecule type" value="Genomic_DNA"/>
</dbReference>
<dbReference type="RefSeq" id="WP_000234823.1">
    <property type="nucleotide sequence ID" value="NZ_CADILS010000001.1"/>
</dbReference>
<dbReference type="SMR" id="A1AAB0"/>
<dbReference type="GeneID" id="93776245"/>
<dbReference type="KEGG" id="ecv:APECO1_299"/>
<dbReference type="HOGENOM" id="CLU_017584_9_4_6"/>
<dbReference type="Proteomes" id="UP000008216">
    <property type="component" value="Chromosome"/>
</dbReference>
<dbReference type="GO" id="GO:0005737">
    <property type="term" value="C:cytoplasm"/>
    <property type="evidence" value="ECO:0007669"/>
    <property type="project" value="UniProtKB-SubCell"/>
</dbReference>
<dbReference type="GO" id="GO:0003677">
    <property type="term" value="F:DNA binding"/>
    <property type="evidence" value="ECO:0007669"/>
    <property type="project" value="UniProtKB-KW"/>
</dbReference>
<dbReference type="GO" id="GO:0003700">
    <property type="term" value="F:DNA-binding transcription factor activity"/>
    <property type="evidence" value="ECO:0007669"/>
    <property type="project" value="UniProtKB-UniRule"/>
</dbReference>
<dbReference type="GO" id="GO:0000062">
    <property type="term" value="F:fatty-acyl-CoA binding"/>
    <property type="evidence" value="ECO:0007669"/>
    <property type="project" value="InterPro"/>
</dbReference>
<dbReference type="GO" id="GO:0006631">
    <property type="term" value="P:fatty acid metabolic process"/>
    <property type="evidence" value="ECO:0007669"/>
    <property type="project" value="UniProtKB-KW"/>
</dbReference>
<dbReference type="GO" id="GO:0019217">
    <property type="term" value="P:regulation of fatty acid metabolic process"/>
    <property type="evidence" value="ECO:0007669"/>
    <property type="project" value="UniProtKB-UniRule"/>
</dbReference>
<dbReference type="CDD" id="cd07377">
    <property type="entry name" value="WHTH_GntR"/>
    <property type="match status" value="1"/>
</dbReference>
<dbReference type="FunFam" id="1.10.10.10:FF:000036">
    <property type="entry name" value="Fatty acid metabolism regulator protein"/>
    <property type="match status" value="1"/>
</dbReference>
<dbReference type="FunFam" id="1.20.120.530:FF:000003">
    <property type="entry name" value="Fatty acid metabolism regulator protein"/>
    <property type="match status" value="1"/>
</dbReference>
<dbReference type="Gene3D" id="1.20.120.530">
    <property type="entry name" value="GntR ligand-binding domain-like"/>
    <property type="match status" value="1"/>
</dbReference>
<dbReference type="Gene3D" id="1.10.10.10">
    <property type="entry name" value="Winged helix-like DNA-binding domain superfamily/Winged helix DNA-binding domain"/>
    <property type="match status" value="1"/>
</dbReference>
<dbReference type="HAMAP" id="MF_00696">
    <property type="entry name" value="HTH_FadR"/>
    <property type="match status" value="1"/>
</dbReference>
<dbReference type="InterPro" id="IPR014178">
    <property type="entry name" value="FA-response_TF_FadR"/>
</dbReference>
<dbReference type="InterPro" id="IPR028374">
    <property type="entry name" value="FadR_C"/>
</dbReference>
<dbReference type="InterPro" id="IPR008920">
    <property type="entry name" value="TF_FadR/GntR_C"/>
</dbReference>
<dbReference type="InterPro" id="IPR000524">
    <property type="entry name" value="Tscrpt_reg_HTH_GntR"/>
</dbReference>
<dbReference type="InterPro" id="IPR036388">
    <property type="entry name" value="WH-like_DNA-bd_sf"/>
</dbReference>
<dbReference type="InterPro" id="IPR036390">
    <property type="entry name" value="WH_DNA-bd_sf"/>
</dbReference>
<dbReference type="NCBIfam" id="TIGR02812">
    <property type="entry name" value="fadR_gamma"/>
    <property type="match status" value="1"/>
</dbReference>
<dbReference type="NCBIfam" id="NF003444">
    <property type="entry name" value="PRK04984.1"/>
    <property type="match status" value="1"/>
</dbReference>
<dbReference type="PANTHER" id="PTHR43537:SF52">
    <property type="entry name" value="FATTY ACID METABOLISM REGULATOR PROTEIN"/>
    <property type="match status" value="1"/>
</dbReference>
<dbReference type="PANTHER" id="PTHR43537">
    <property type="entry name" value="TRANSCRIPTIONAL REGULATOR, GNTR FAMILY"/>
    <property type="match status" value="1"/>
</dbReference>
<dbReference type="Pfam" id="PF07840">
    <property type="entry name" value="FadR_C"/>
    <property type="match status" value="1"/>
</dbReference>
<dbReference type="Pfam" id="PF00392">
    <property type="entry name" value="GntR"/>
    <property type="match status" value="1"/>
</dbReference>
<dbReference type="PRINTS" id="PR00035">
    <property type="entry name" value="HTHGNTR"/>
</dbReference>
<dbReference type="SMART" id="SM00345">
    <property type="entry name" value="HTH_GNTR"/>
    <property type="match status" value="1"/>
</dbReference>
<dbReference type="SUPFAM" id="SSF48008">
    <property type="entry name" value="GntR ligand-binding domain-like"/>
    <property type="match status" value="1"/>
</dbReference>
<dbReference type="SUPFAM" id="SSF46785">
    <property type="entry name" value="Winged helix' DNA-binding domain"/>
    <property type="match status" value="1"/>
</dbReference>
<dbReference type="PROSITE" id="PS50949">
    <property type="entry name" value="HTH_GNTR"/>
    <property type="match status" value="1"/>
</dbReference>
<name>FADR_ECOK1</name>
<reference key="1">
    <citation type="journal article" date="2007" name="J. Bacteriol.">
        <title>The genome sequence of avian pathogenic Escherichia coli strain O1:K1:H7 shares strong similarities with human extraintestinal pathogenic E. coli genomes.</title>
        <authorList>
            <person name="Johnson T.J."/>
            <person name="Kariyawasam S."/>
            <person name="Wannemuehler Y."/>
            <person name="Mangiamele P."/>
            <person name="Johnson S.J."/>
            <person name="Doetkott C."/>
            <person name="Skyberg J.A."/>
            <person name="Lynne A.M."/>
            <person name="Johnson J.R."/>
            <person name="Nolan L.K."/>
        </authorList>
    </citation>
    <scope>NUCLEOTIDE SEQUENCE [LARGE SCALE GENOMIC DNA]</scope>
</reference>
<feature type="chain" id="PRO_0000301504" description="Fatty acid metabolism regulator protein">
    <location>
        <begin position="1"/>
        <end position="239"/>
    </location>
</feature>
<feature type="domain" description="HTH gntR-type" evidence="1">
    <location>
        <begin position="6"/>
        <end position="74"/>
    </location>
</feature>
<feature type="DNA-binding region" description="H-T-H motif" evidence="1">
    <location>
        <begin position="34"/>
        <end position="53"/>
    </location>
</feature>